<feature type="chain" id="PRO_0000371399" description="Probable polyketide synthase 42">
    <location>
        <begin position="1"/>
        <end position="2655"/>
    </location>
</feature>
<feature type="domain" description="Ketosynthase family 3 (KS3)" evidence="4">
    <location>
        <begin position="16"/>
        <end position="445"/>
    </location>
</feature>
<feature type="domain" description="PKS/mFAS DH" evidence="5">
    <location>
        <begin position="926"/>
        <end position="1234"/>
    </location>
</feature>
<feature type="domain" description="Carrier" evidence="3">
    <location>
        <begin position="2517"/>
        <end position="2594"/>
    </location>
</feature>
<feature type="region of interest" description="Acyl/malonyl transferase">
    <location>
        <begin position="634"/>
        <end position="667"/>
    </location>
</feature>
<feature type="region of interest" description="N-terminal hotdog fold" evidence="5">
    <location>
        <begin position="926"/>
        <end position="1059"/>
    </location>
</feature>
<feature type="region of interest" description="C-terminal hotdog fold" evidence="5">
    <location>
        <begin position="1074"/>
        <end position="1234"/>
    </location>
</feature>
<feature type="region of interest" description="Disordered" evidence="7">
    <location>
        <begin position="1700"/>
        <end position="1719"/>
    </location>
</feature>
<feature type="region of interest" description="Disordered" evidence="7">
    <location>
        <begin position="2612"/>
        <end position="2655"/>
    </location>
</feature>
<feature type="coiled-coil region" evidence="2">
    <location>
        <begin position="2618"/>
        <end position="2655"/>
    </location>
</feature>
<feature type="compositionally biased region" description="Basic and acidic residues" evidence="7">
    <location>
        <begin position="2617"/>
        <end position="2655"/>
    </location>
</feature>
<feature type="active site" description="For beta-ketoacyl synthase activity" evidence="4">
    <location>
        <position position="186"/>
    </location>
</feature>
<feature type="active site" description="For beta-ketoacyl synthase activity" evidence="4">
    <location>
        <position position="325"/>
    </location>
</feature>
<feature type="active site" description="For beta-ketoacyl synthase activity" evidence="4">
    <location>
        <position position="368"/>
    </location>
</feature>
<feature type="active site" description="For acyl/malonyl transferase activity" evidence="6">
    <location>
        <position position="644"/>
    </location>
</feature>
<feature type="active site" description="Proton acceptor; for dehydratase activity" evidence="5">
    <location>
        <position position="970"/>
    </location>
</feature>
<feature type="active site" description="Proton donor; for dehydratase activity" evidence="5">
    <location>
        <position position="1146"/>
    </location>
</feature>
<feature type="modified residue" description="O-(pantetheine 4'-phosphoryl)serine" evidence="3">
    <location>
        <position position="2554"/>
    </location>
</feature>
<sequence>MIESQREFNCIGGDNQNGVAVIGVGFKIPLDLENCLSSPSELYSALFNEFDSVTKNTSSRWSDNYFKNGDIVSLSAGLLPLREIKSFDPTFFGINPSDADLIDPQQRLLLKCVWNALEDGGIDPISIRSSDTSVYIGCSTIDYFLLNRNPVDPHNHGIQTASYSIPNRISYCFDFRGESLFVDTACSSSLNAVHLGYNSIINLKSKLSIVGGSNLILDPQNSIFFSKQQVNGPSGKCNSFSEEADGFVRSETVGVVVLKNLKDAIKDGDRIYCVIQGSNSNVDGNYEKLNYISPSKLSQAENITKALKSTNGAVNASDIDYFECHGTGTPTGDPIELEGISIALNRTQQSTTLSNPLLIGSIKSNIGHGEASSGIASLIKCCVMFKYRQFLPNINFKTPNPLIKFKEWNLKVVTEPVPFNNNKQTIMAINNFGVSGSNCCIILSEYKSNNNNNNDFKATTHLKSKKFIIPFSSNSSTSLDNYKSLLSNETNNFQDFVIKQINNKSTSLIQRSVIIASNWSEFNESSNEIQSNIKKSIISNITIKKKNAVTVFVFCGQGSQYNKMALSLYENEHIFKSTMDKLDKELSKHYGYSILEKLRSITDEDLVTIHQPILAIPVNVMVQVSLYELYKHWGIKSDIMVGHSFGEIACSYCSGMVDFKTLCYLTYHRSVAQNKTIGSGKMLSINIGAKEYLDSYSTKYPSVEIACYNSETSIVIAGNEELLNEISKDLKSKDIFTAMLPSLSAFHTTHQSVIKDDICSLNFKSTLSKITVFSTVTSNQFGINNNNNNNNNQLNSNYLFQNVIQPVKFSETISNIYKYIESNDMGNEITFIEIAPHPTLQYYLNQMKSQQSEYFNNGEKISIYSACNKKKNDYNEFLKTISTLFVNGYNNINFKSQIINNNNNDNNNNFNLPLYQWDDNEYYKIHPTWKKANKNGPSINHLGNLNDSSIKSFKTYINTRKPQFQWLKGHSLKGKVVFPGMGYISNLLSVYNMNQDITINEIQFKSAFILVDGVNNCLETSIVPLTKNEFNIKFHFKDLKTNKWVLCANANYSLFKHNDNNDKLDIEKLKSNCNYTIISKDELYNNIRAKSGLIYKGLFQGVKEAFIGNRCSLTVLSLNEIENQQEFKHLLENRNFNSLFNTAILDSCLHGSLHSKEQSQIYFDKCEGFKYYSNNINLATSKRNEYKEINVYIETNPVINSTVIVSLKIMLPDGTLLIEIQKVVCKSSIPIIDSTSVIQPSPKDLHTPYYQPKNSLIKPPQSFKHLHCMKEFASIESDNREMVYMSIYHLIFKAINARSPTKINLESLENLTLDQFKELIKDSAANIQRSNQFIYECLKLYHTNHSNYKKNQIKDFIKECEDFNGYNQIIFKTIKIYAKSLFPLPDDDPFTDTIQSLFEDDQLENVYIHLKHLYPVNNLLSEIVFQSIKPIINQTSTFRILEIGAGYGTISQLIFDKLEQLLADNFTSSRIDIEYTFTDISNTFLPRAKERYSKYKRFNIIYKLLDLELPLTEGIQDFRPLYYDIVVMSNVLHVVKDINFSTNEIYKVLKQNGQLIFVEPTYKNLYLDTIFGIFPQWWSFNDDIRTDRCCLEPSKWFEFLETINFKDTIILGQDNKEILKNVENSIILVQTRKPSQLELSINNSPSTNQFKSFENIILYTDDNQQPNDCSEIIDLLKSLELPIKIINNIDQFNQIIKTQYNNNNNNNNNNNNNNNNNNNNTNNNLIIFLKSVNQLNTNNYKDITFEYVQINQILVKLELEENYKLLLITNNSQSSNYLSNSLIGTSRYLFADIVSSKLDIITIDFDTVSIKNHQNVISVINHLLDSKDNSEREYYIINNEINIERYKNESNIKHQLKSKTFQENKDELMVQLDSNLEYRLKSKSKQELKSTHVEIQVKAIGINYKDYATYSGLIDSIIEIDKDKEKDENYDQNYPSIGNDFSGVITRIGSDVRKFKVGDEVCGLAPKTSASHIITEEGYLCKKPSNISHSEAASSVTVYTTSFQSIYSIGDLKKNETILIHSGSGGIGLSALEILKWKNHQGYIFATVGSEDKVKYLTDTYGSFITGIYSSRDKDYQDQIKEKLKSLGCDIDHQGVDLILNTLSVEYMDSNFKCLNQKGRCIDLSITHLTPFDYMDYNKFKFNVSYGNIELVVLPSKIIKDHLKKMLKAFSLGSLRFIPIVEFSNLNIRNAVEYINQRKHIGKIVVKNDVDFINKLFIEQQQQQNSVENNEILMKDKYDISNLELGKNILLTGQTGIILTILKWLYKHSNNSIENIIIISKSKLKWELELFINESTNNRIKIHYKQADVGNNNELNQCFEELRLRHSIEDINSIFHFAFINDIGQFEDVNMNRMDIAHHAKAIGSLNLHNQSIERKWNIKQFVLASSALSVFGGDNQCCYISACSVLDSLSKYRKSIGLPSLSINFGGVTSTGFVSRSGAVEANLESSIINLITPQSLISSLDLFIQNSQTFSNYTHFNFIYDNIESYSLNRMLFKFDYLINQHSSLVSNKRLGGINENNNIGDLLVSKIGELLSIEPSKLNLDFRLVDYGLDSLVIVQLKNFIDKQFQPHLISILQLQNNKISTTIEIIIKGYNNNQNKKIKNEQSNDIPSVVQKETIKDNNENKDDIKIDMDDKKENLKGKKENIDDKKENNN</sequence>
<reference key="1">
    <citation type="journal article" date="2005" name="Nature">
        <title>The genome of the social amoeba Dictyostelium discoideum.</title>
        <authorList>
            <person name="Eichinger L."/>
            <person name="Pachebat J.A."/>
            <person name="Gloeckner G."/>
            <person name="Rajandream M.A."/>
            <person name="Sucgang R."/>
            <person name="Berriman M."/>
            <person name="Song J."/>
            <person name="Olsen R."/>
            <person name="Szafranski K."/>
            <person name="Xu Q."/>
            <person name="Tunggal B."/>
            <person name="Kummerfeld S."/>
            <person name="Madera M."/>
            <person name="Konfortov B.A."/>
            <person name="Rivero F."/>
            <person name="Bankier A.T."/>
            <person name="Lehmann R."/>
            <person name="Hamlin N."/>
            <person name="Davies R."/>
            <person name="Gaudet P."/>
            <person name="Fey P."/>
            <person name="Pilcher K."/>
            <person name="Chen G."/>
            <person name="Saunders D."/>
            <person name="Sodergren E.J."/>
            <person name="Davis P."/>
            <person name="Kerhornou A."/>
            <person name="Nie X."/>
            <person name="Hall N."/>
            <person name="Anjard C."/>
            <person name="Hemphill L."/>
            <person name="Bason N."/>
            <person name="Farbrother P."/>
            <person name="Desany B."/>
            <person name="Just E."/>
            <person name="Morio T."/>
            <person name="Rost R."/>
            <person name="Churcher C.M."/>
            <person name="Cooper J."/>
            <person name="Haydock S."/>
            <person name="van Driessche N."/>
            <person name="Cronin A."/>
            <person name="Goodhead I."/>
            <person name="Muzny D.M."/>
            <person name="Mourier T."/>
            <person name="Pain A."/>
            <person name="Lu M."/>
            <person name="Harper D."/>
            <person name="Lindsay R."/>
            <person name="Hauser H."/>
            <person name="James K.D."/>
            <person name="Quiles M."/>
            <person name="Madan Babu M."/>
            <person name="Saito T."/>
            <person name="Buchrieser C."/>
            <person name="Wardroper A."/>
            <person name="Felder M."/>
            <person name="Thangavelu M."/>
            <person name="Johnson D."/>
            <person name="Knights A."/>
            <person name="Loulseged H."/>
            <person name="Mungall K.L."/>
            <person name="Oliver K."/>
            <person name="Price C."/>
            <person name="Quail M.A."/>
            <person name="Urushihara H."/>
            <person name="Hernandez J."/>
            <person name="Rabbinowitsch E."/>
            <person name="Steffen D."/>
            <person name="Sanders M."/>
            <person name="Ma J."/>
            <person name="Kohara Y."/>
            <person name="Sharp S."/>
            <person name="Simmonds M.N."/>
            <person name="Spiegler S."/>
            <person name="Tivey A."/>
            <person name="Sugano S."/>
            <person name="White B."/>
            <person name="Walker D."/>
            <person name="Woodward J.R."/>
            <person name="Winckler T."/>
            <person name="Tanaka Y."/>
            <person name="Shaulsky G."/>
            <person name="Schleicher M."/>
            <person name="Weinstock G.M."/>
            <person name="Rosenthal A."/>
            <person name="Cox E.C."/>
            <person name="Chisholm R.L."/>
            <person name="Gibbs R.A."/>
            <person name="Loomis W.F."/>
            <person name="Platzer M."/>
            <person name="Kay R.R."/>
            <person name="Williams J.G."/>
            <person name="Dear P.H."/>
            <person name="Noegel A.A."/>
            <person name="Barrell B.G."/>
            <person name="Kuspa A."/>
        </authorList>
    </citation>
    <scope>NUCLEOTIDE SEQUENCE [LARGE SCALE GENOMIC DNA]</scope>
    <source>
        <strain>AX4</strain>
    </source>
</reference>
<reference key="2">
    <citation type="journal article" date="2007" name="Bioinformatics">
        <title>Polyketide synthase genes and the natural products potential of Dictyostelium discoideum.</title>
        <authorList>
            <person name="Zucko J."/>
            <person name="Skunca N."/>
            <person name="Curk T."/>
            <person name="Zupan B."/>
            <person name="Long P.F."/>
            <person name="Cullum J."/>
            <person name="Kessin R.H."/>
            <person name="Hranueli D."/>
        </authorList>
    </citation>
    <scope>IDENTIFICATION</scope>
</reference>
<keyword id="KW-0175">Coiled coil</keyword>
<keyword id="KW-0596">Phosphopantetheine</keyword>
<keyword id="KW-0597">Phosphoprotein</keyword>
<keyword id="KW-1185">Reference proteome</keyword>
<keyword id="KW-0808">Transferase</keyword>
<comment type="function">
    <text evidence="1">Probable polyketide synthase.</text>
</comment>
<comment type="cofactor">
    <cofactor evidence="1">
        <name>pantetheine 4'-phosphate</name>
        <dbReference type="ChEBI" id="CHEBI:47942"/>
    </cofactor>
    <text evidence="1">Binds 1 phosphopantetheine covalently.</text>
</comment>
<comment type="domain">
    <text evidence="1">Modular protein that is responsible for the completion of one condensation-processing cycle. The beta-ketoacyl synthase region is responsible for the actual condensation reaction while the acyl/malonyl transferase region is responsible for incorporating carboxylic acids units onto an acyl carrier protein (ACP) domain (By similarity).</text>
</comment>
<comment type="miscellaneous">
    <text>Encoded by one of the numerous copies of polyketide synthase genes and clustered as a pair pks42/pks43_ps in chromosome 6.</text>
</comment>
<name>PKS42_DICDI</name>
<dbReference type="EC" id="2.3.1.-"/>
<dbReference type="EMBL" id="AAFI02000190">
    <property type="protein sequence ID" value="EAL61251.2"/>
    <property type="molecule type" value="Genomic_DNA"/>
</dbReference>
<dbReference type="RefSeq" id="XP_629652.2">
    <property type="nucleotide sequence ID" value="XM_629650.2"/>
</dbReference>
<dbReference type="SMR" id="Q54D44"/>
<dbReference type="FunCoup" id="Q54D44">
    <property type="interactions" value="1"/>
</dbReference>
<dbReference type="STRING" id="44689.Q54D44"/>
<dbReference type="PaxDb" id="44689-DDB0304694"/>
<dbReference type="EnsemblProtists" id="EAL61251">
    <property type="protein sequence ID" value="EAL61251"/>
    <property type="gene ID" value="DDB_G0292544"/>
</dbReference>
<dbReference type="GeneID" id="8628717"/>
<dbReference type="KEGG" id="ddi:DDB_G0292544"/>
<dbReference type="dictyBase" id="DDB_G0292544">
    <property type="gene designation" value="pks42"/>
</dbReference>
<dbReference type="VEuPathDB" id="AmoebaDB:DDB_G0292544"/>
<dbReference type="eggNOG" id="KOG1202">
    <property type="taxonomic scope" value="Eukaryota"/>
</dbReference>
<dbReference type="HOGENOM" id="CLU_000022_31_5_1"/>
<dbReference type="InParanoid" id="Q54D44"/>
<dbReference type="PhylomeDB" id="Q54D44"/>
<dbReference type="PRO" id="PR:Q54D44"/>
<dbReference type="Proteomes" id="UP000002195">
    <property type="component" value="Chromosome 6"/>
</dbReference>
<dbReference type="GO" id="GO:0004315">
    <property type="term" value="F:3-oxoacyl-[acyl-carrier-protein] synthase activity"/>
    <property type="evidence" value="ECO:0007669"/>
    <property type="project" value="InterPro"/>
</dbReference>
<dbReference type="GO" id="GO:0016491">
    <property type="term" value="F:oxidoreductase activity"/>
    <property type="evidence" value="ECO:0007669"/>
    <property type="project" value="InterPro"/>
</dbReference>
<dbReference type="GO" id="GO:0006633">
    <property type="term" value="P:fatty acid biosynthetic process"/>
    <property type="evidence" value="ECO:0000318"/>
    <property type="project" value="GO_Central"/>
</dbReference>
<dbReference type="CDD" id="cd02440">
    <property type="entry name" value="AdoMet_MTases"/>
    <property type="match status" value="1"/>
</dbReference>
<dbReference type="CDD" id="cd05195">
    <property type="entry name" value="enoyl_red"/>
    <property type="match status" value="1"/>
</dbReference>
<dbReference type="CDD" id="cd08954">
    <property type="entry name" value="KR_1_FAS_SDR_x"/>
    <property type="match status" value="1"/>
</dbReference>
<dbReference type="CDD" id="cd00833">
    <property type="entry name" value="PKS"/>
    <property type="match status" value="1"/>
</dbReference>
<dbReference type="Gene3D" id="3.40.47.10">
    <property type="match status" value="1"/>
</dbReference>
<dbReference type="Gene3D" id="1.10.1200.10">
    <property type="entry name" value="ACP-like"/>
    <property type="match status" value="1"/>
</dbReference>
<dbReference type="Gene3D" id="3.40.366.10">
    <property type="entry name" value="Malonyl-Coenzyme A Acyl Carrier Protein, domain 2"/>
    <property type="match status" value="1"/>
</dbReference>
<dbReference type="Gene3D" id="3.90.180.10">
    <property type="entry name" value="Medium-chain alcohol dehydrogenases, catalytic domain"/>
    <property type="match status" value="1"/>
</dbReference>
<dbReference type="Gene3D" id="3.40.50.720">
    <property type="entry name" value="NAD(P)-binding Rossmann-like Domain"/>
    <property type="match status" value="2"/>
</dbReference>
<dbReference type="Gene3D" id="3.10.129.110">
    <property type="entry name" value="Polyketide synthase dehydratase"/>
    <property type="match status" value="1"/>
</dbReference>
<dbReference type="Gene3D" id="3.40.50.150">
    <property type="entry name" value="Vaccinia Virus protein VP39"/>
    <property type="match status" value="1"/>
</dbReference>
<dbReference type="InterPro" id="IPR001227">
    <property type="entry name" value="Ac_transferase_dom_sf"/>
</dbReference>
<dbReference type="InterPro" id="IPR036736">
    <property type="entry name" value="ACP-like_sf"/>
</dbReference>
<dbReference type="InterPro" id="IPR014043">
    <property type="entry name" value="Acyl_transferase_dom"/>
</dbReference>
<dbReference type="InterPro" id="IPR016035">
    <property type="entry name" value="Acyl_Trfase/lysoPLipase"/>
</dbReference>
<dbReference type="InterPro" id="IPR013154">
    <property type="entry name" value="ADH-like_N"/>
</dbReference>
<dbReference type="InterPro" id="IPR011032">
    <property type="entry name" value="GroES-like_sf"/>
</dbReference>
<dbReference type="InterPro" id="IPR018201">
    <property type="entry name" value="Ketoacyl_synth_AS"/>
</dbReference>
<dbReference type="InterPro" id="IPR014031">
    <property type="entry name" value="Ketoacyl_synth_C"/>
</dbReference>
<dbReference type="InterPro" id="IPR014030">
    <property type="entry name" value="Ketoacyl_synth_N"/>
</dbReference>
<dbReference type="InterPro" id="IPR016036">
    <property type="entry name" value="Malonyl_transacylase_ACP-bd"/>
</dbReference>
<dbReference type="InterPro" id="IPR013217">
    <property type="entry name" value="Methyltransf_12"/>
</dbReference>
<dbReference type="InterPro" id="IPR036291">
    <property type="entry name" value="NAD(P)-bd_dom_sf"/>
</dbReference>
<dbReference type="InterPro" id="IPR032821">
    <property type="entry name" value="PKS_assoc"/>
</dbReference>
<dbReference type="InterPro" id="IPR020841">
    <property type="entry name" value="PKS_Beta-ketoAc_synthase_dom"/>
</dbReference>
<dbReference type="InterPro" id="IPR042104">
    <property type="entry name" value="PKS_dehydratase_sf"/>
</dbReference>
<dbReference type="InterPro" id="IPR020843">
    <property type="entry name" value="PKS_ER"/>
</dbReference>
<dbReference type="InterPro" id="IPR013968">
    <property type="entry name" value="PKS_KR"/>
</dbReference>
<dbReference type="InterPro" id="IPR049900">
    <property type="entry name" value="PKS_mFAS_DH"/>
</dbReference>
<dbReference type="InterPro" id="IPR050444">
    <property type="entry name" value="Polyketide_Synthase"/>
</dbReference>
<dbReference type="InterPro" id="IPR009081">
    <property type="entry name" value="PP-bd_ACP"/>
</dbReference>
<dbReference type="InterPro" id="IPR029063">
    <property type="entry name" value="SAM-dependent_MTases_sf"/>
</dbReference>
<dbReference type="InterPro" id="IPR016039">
    <property type="entry name" value="Thiolase-like"/>
</dbReference>
<dbReference type="PANTHER" id="PTHR45681:SF5">
    <property type="entry name" value="POLYKETIDE SYNTHASE 27-RELATED"/>
    <property type="match status" value="1"/>
</dbReference>
<dbReference type="PANTHER" id="PTHR45681">
    <property type="entry name" value="POLYKETIDE SYNTHASE 44-RELATED"/>
    <property type="match status" value="1"/>
</dbReference>
<dbReference type="Pfam" id="PF23297">
    <property type="entry name" value="ACP_SdgA_C"/>
    <property type="match status" value="1"/>
</dbReference>
<dbReference type="Pfam" id="PF00698">
    <property type="entry name" value="Acyl_transf_1"/>
    <property type="match status" value="1"/>
</dbReference>
<dbReference type="Pfam" id="PF08240">
    <property type="entry name" value="ADH_N"/>
    <property type="match status" value="1"/>
</dbReference>
<dbReference type="Pfam" id="PF13602">
    <property type="entry name" value="ADH_zinc_N_2"/>
    <property type="match status" value="1"/>
</dbReference>
<dbReference type="Pfam" id="PF16197">
    <property type="entry name" value="KAsynt_C_assoc"/>
    <property type="match status" value="1"/>
</dbReference>
<dbReference type="Pfam" id="PF00109">
    <property type="entry name" value="ketoacyl-synt"/>
    <property type="match status" value="1"/>
</dbReference>
<dbReference type="Pfam" id="PF02801">
    <property type="entry name" value="Ketoacyl-synt_C"/>
    <property type="match status" value="1"/>
</dbReference>
<dbReference type="Pfam" id="PF08659">
    <property type="entry name" value="KR"/>
    <property type="match status" value="1"/>
</dbReference>
<dbReference type="Pfam" id="PF08242">
    <property type="entry name" value="Methyltransf_12"/>
    <property type="match status" value="1"/>
</dbReference>
<dbReference type="SMART" id="SM00827">
    <property type="entry name" value="PKS_AT"/>
    <property type="match status" value="1"/>
</dbReference>
<dbReference type="SMART" id="SM00829">
    <property type="entry name" value="PKS_ER"/>
    <property type="match status" value="1"/>
</dbReference>
<dbReference type="SMART" id="SM00822">
    <property type="entry name" value="PKS_KR"/>
    <property type="match status" value="1"/>
</dbReference>
<dbReference type="SMART" id="SM00825">
    <property type="entry name" value="PKS_KS"/>
    <property type="match status" value="1"/>
</dbReference>
<dbReference type="SUPFAM" id="SSF47336">
    <property type="entry name" value="ACP-like"/>
    <property type="match status" value="1"/>
</dbReference>
<dbReference type="SUPFAM" id="SSF52151">
    <property type="entry name" value="FabD/lysophospholipase-like"/>
    <property type="match status" value="1"/>
</dbReference>
<dbReference type="SUPFAM" id="SSF50129">
    <property type="entry name" value="GroES-like"/>
    <property type="match status" value="1"/>
</dbReference>
<dbReference type="SUPFAM" id="SSF51735">
    <property type="entry name" value="NAD(P)-binding Rossmann-fold domains"/>
    <property type="match status" value="2"/>
</dbReference>
<dbReference type="SUPFAM" id="SSF55048">
    <property type="entry name" value="Probable ACP-binding domain of malonyl-CoA ACP transacylase"/>
    <property type="match status" value="1"/>
</dbReference>
<dbReference type="SUPFAM" id="SSF53335">
    <property type="entry name" value="S-adenosyl-L-methionine-dependent methyltransferases"/>
    <property type="match status" value="1"/>
</dbReference>
<dbReference type="SUPFAM" id="SSF53901">
    <property type="entry name" value="Thiolase-like"/>
    <property type="match status" value="1"/>
</dbReference>
<dbReference type="PROSITE" id="PS50075">
    <property type="entry name" value="CARRIER"/>
    <property type="match status" value="1"/>
</dbReference>
<dbReference type="PROSITE" id="PS00606">
    <property type="entry name" value="KS3_1"/>
    <property type="match status" value="1"/>
</dbReference>
<dbReference type="PROSITE" id="PS52004">
    <property type="entry name" value="KS3_2"/>
    <property type="match status" value="1"/>
</dbReference>
<dbReference type="PROSITE" id="PS52019">
    <property type="entry name" value="PKS_MFAS_DH"/>
    <property type="match status" value="1"/>
</dbReference>
<evidence type="ECO:0000250" key="1"/>
<evidence type="ECO:0000255" key="2"/>
<evidence type="ECO:0000255" key="3">
    <source>
        <dbReference type="PROSITE-ProRule" id="PRU00258"/>
    </source>
</evidence>
<evidence type="ECO:0000255" key="4">
    <source>
        <dbReference type="PROSITE-ProRule" id="PRU01348"/>
    </source>
</evidence>
<evidence type="ECO:0000255" key="5">
    <source>
        <dbReference type="PROSITE-ProRule" id="PRU01363"/>
    </source>
</evidence>
<evidence type="ECO:0000255" key="6">
    <source>
        <dbReference type="PROSITE-ProRule" id="PRU10022"/>
    </source>
</evidence>
<evidence type="ECO:0000256" key="7">
    <source>
        <dbReference type="SAM" id="MobiDB-lite"/>
    </source>
</evidence>
<proteinExistence type="inferred from homology"/>
<protein>
    <recommendedName>
        <fullName>Probable polyketide synthase 42</fullName>
        <shortName>dipks42</shortName>
        <ecNumber>2.3.1.-</ecNumber>
    </recommendedName>
</protein>
<organism>
    <name type="scientific">Dictyostelium discoideum</name>
    <name type="common">Social amoeba</name>
    <dbReference type="NCBI Taxonomy" id="44689"/>
    <lineage>
        <taxon>Eukaryota</taxon>
        <taxon>Amoebozoa</taxon>
        <taxon>Evosea</taxon>
        <taxon>Eumycetozoa</taxon>
        <taxon>Dictyostelia</taxon>
        <taxon>Dictyosteliales</taxon>
        <taxon>Dictyosteliaceae</taxon>
        <taxon>Dictyostelium</taxon>
    </lineage>
</organism>
<gene>
    <name type="primary">pks42</name>
    <name type="ORF">DDB_G0292544</name>
</gene>
<accession>Q54D44</accession>